<protein>
    <recommendedName>
        <fullName evidence="1">Phenylalanine--tRNA ligase alpha subunit</fullName>
        <ecNumber evidence="1">6.1.1.20</ecNumber>
    </recommendedName>
    <alternativeName>
        <fullName evidence="1">Phenylalanyl-tRNA synthetase alpha subunit</fullName>
        <shortName evidence="1">PheRS</shortName>
    </alternativeName>
</protein>
<name>SYFA_YERPP</name>
<keyword id="KW-0030">Aminoacyl-tRNA synthetase</keyword>
<keyword id="KW-0067">ATP-binding</keyword>
<keyword id="KW-0963">Cytoplasm</keyword>
<keyword id="KW-0436">Ligase</keyword>
<keyword id="KW-0460">Magnesium</keyword>
<keyword id="KW-0479">Metal-binding</keyword>
<keyword id="KW-0547">Nucleotide-binding</keyword>
<keyword id="KW-0648">Protein biosynthesis</keyword>
<feature type="chain" id="PRO_1000006917" description="Phenylalanine--tRNA ligase alpha subunit">
    <location>
        <begin position="1"/>
        <end position="327"/>
    </location>
</feature>
<feature type="binding site" evidence="1">
    <location>
        <position position="252"/>
    </location>
    <ligand>
        <name>Mg(2+)</name>
        <dbReference type="ChEBI" id="CHEBI:18420"/>
        <note>shared with beta subunit</note>
    </ligand>
</feature>
<sequence length="327" mass="37139">MPHLAELVAKAKAAVEGAQDIAALDLVRVEYLGKKGHLTLQMTSLRELPAEERPAAGAVINQAKQEVQEALNARKEKLESAVLNARLAAETIDVSLPGRRMENGGLHPVTRTIERIETFFGELGFSVESGPEIEDDYHNFDALNIPAHHPARADHDTFWFDATRLLRTQTSGVQIRTMQEQQPPIRIIVPGRVYRNDYDQTHTPMFHQMEGLIVDRDISFTNLKGTLHDFLRNFFEEDLQIRFRPSYFPFTEPSAEVDVMGKNGKWLEVLGCGMVHPNVLRNVGIDPEIYSGFAFGMGMERLTMLRYGVTDLRAFFENDLRFLKQFK</sequence>
<evidence type="ECO:0000255" key="1">
    <source>
        <dbReference type="HAMAP-Rule" id="MF_00281"/>
    </source>
</evidence>
<proteinExistence type="inferred from homology"/>
<reference key="1">
    <citation type="submission" date="2007-02" db="EMBL/GenBank/DDBJ databases">
        <title>Complete sequence of chromosome of Yersinia pestis Pestoides F.</title>
        <authorList>
            <consortium name="US DOE Joint Genome Institute"/>
            <person name="Copeland A."/>
            <person name="Lucas S."/>
            <person name="Lapidus A."/>
            <person name="Barry K."/>
            <person name="Detter J.C."/>
            <person name="Glavina del Rio T."/>
            <person name="Hammon N."/>
            <person name="Israni S."/>
            <person name="Dalin E."/>
            <person name="Tice H."/>
            <person name="Pitluck S."/>
            <person name="Di Bartolo G."/>
            <person name="Chain P."/>
            <person name="Malfatti S."/>
            <person name="Shin M."/>
            <person name="Vergez L."/>
            <person name="Schmutz J."/>
            <person name="Larimer F."/>
            <person name="Land M."/>
            <person name="Hauser L."/>
            <person name="Worsham P."/>
            <person name="Chu M."/>
            <person name="Bearden S."/>
            <person name="Garcia E."/>
            <person name="Richardson P."/>
        </authorList>
    </citation>
    <scope>NUCLEOTIDE SEQUENCE [LARGE SCALE GENOMIC DNA]</scope>
    <source>
        <strain>Pestoides F</strain>
    </source>
</reference>
<dbReference type="EC" id="6.1.1.20" evidence="1"/>
<dbReference type="EMBL" id="CP000668">
    <property type="protein sequence ID" value="ABP39127.1"/>
    <property type="molecule type" value="Genomic_DNA"/>
</dbReference>
<dbReference type="RefSeq" id="WP_002211832.1">
    <property type="nucleotide sequence ID" value="NZ_CP009715.1"/>
</dbReference>
<dbReference type="SMR" id="A4TIL5"/>
<dbReference type="GeneID" id="57976248"/>
<dbReference type="KEGG" id="ypp:YPDSF_0721"/>
<dbReference type="PATRIC" id="fig|386656.14.peg.3148"/>
<dbReference type="GO" id="GO:0005737">
    <property type="term" value="C:cytoplasm"/>
    <property type="evidence" value="ECO:0007669"/>
    <property type="project" value="UniProtKB-SubCell"/>
</dbReference>
<dbReference type="GO" id="GO:0005524">
    <property type="term" value="F:ATP binding"/>
    <property type="evidence" value="ECO:0007669"/>
    <property type="project" value="UniProtKB-UniRule"/>
</dbReference>
<dbReference type="GO" id="GO:0000287">
    <property type="term" value="F:magnesium ion binding"/>
    <property type="evidence" value="ECO:0007669"/>
    <property type="project" value="UniProtKB-UniRule"/>
</dbReference>
<dbReference type="GO" id="GO:0004826">
    <property type="term" value="F:phenylalanine-tRNA ligase activity"/>
    <property type="evidence" value="ECO:0007669"/>
    <property type="project" value="UniProtKB-UniRule"/>
</dbReference>
<dbReference type="GO" id="GO:0000049">
    <property type="term" value="F:tRNA binding"/>
    <property type="evidence" value="ECO:0007669"/>
    <property type="project" value="InterPro"/>
</dbReference>
<dbReference type="GO" id="GO:0006432">
    <property type="term" value="P:phenylalanyl-tRNA aminoacylation"/>
    <property type="evidence" value="ECO:0007669"/>
    <property type="project" value="UniProtKB-UniRule"/>
</dbReference>
<dbReference type="CDD" id="cd00496">
    <property type="entry name" value="PheRS_alpha_core"/>
    <property type="match status" value="1"/>
</dbReference>
<dbReference type="FunFam" id="3.30.930.10:FF:000003">
    <property type="entry name" value="Phenylalanine--tRNA ligase alpha subunit"/>
    <property type="match status" value="1"/>
</dbReference>
<dbReference type="Gene3D" id="3.30.930.10">
    <property type="entry name" value="Bira Bifunctional Protein, Domain 2"/>
    <property type="match status" value="1"/>
</dbReference>
<dbReference type="HAMAP" id="MF_00281">
    <property type="entry name" value="Phe_tRNA_synth_alpha1"/>
    <property type="match status" value="1"/>
</dbReference>
<dbReference type="InterPro" id="IPR006195">
    <property type="entry name" value="aa-tRNA-synth_II"/>
</dbReference>
<dbReference type="InterPro" id="IPR045864">
    <property type="entry name" value="aa-tRNA-synth_II/BPL/LPL"/>
</dbReference>
<dbReference type="InterPro" id="IPR004529">
    <property type="entry name" value="Phe-tRNA-synth_IIc_asu"/>
</dbReference>
<dbReference type="InterPro" id="IPR004188">
    <property type="entry name" value="Phe-tRNA_ligase_II_N"/>
</dbReference>
<dbReference type="InterPro" id="IPR022911">
    <property type="entry name" value="Phe_tRNA_ligase_alpha1_bac"/>
</dbReference>
<dbReference type="InterPro" id="IPR002319">
    <property type="entry name" value="Phenylalanyl-tRNA_Synthase"/>
</dbReference>
<dbReference type="InterPro" id="IPR010978">
    <property type="entry name" value="tRNA-bd_arm"/>
</dbReference>
<dbReference type="NCBIfam" id="TIGR00468">
    <property type="entry name" value="pheS"/>
    <property type="match status" value="1"/>
</dbReference>
<dbReference type="PANTHER" id="PTHR11538:SF41">
    <property type="entry name" value="PHENYLALANINE--TRNA LIGASE, MITOCHONDRIAL"/>
    <property type="match status" value="1"/>
</dbReference>
<dbReference type="PANTHER" id="PTHR11538">
    <property type="entry name" value="PHENYLALANYL-TRNA SYNTHETASE"/>
    <property type="match status" value="1"/>
</dbReference>
<dbReference type="Pfam" id="PF02912">
    <property type="entry name" value="Phe_tRNA-synt_N"/>
    <property type="match status" value="1"/>
</dbReference>
<dbReference type="Pfam" id="PF01409">
    <property type="entry name" value="tRNA-synt_2d"/>
    <property type="match status" value="1"/>
</dbReference>
<dbReference type="SUPFAM" id="SSF55681">
    <property type="entry name" value="Class II aaRS and biotin synthetases"/>
    <property type="match status" value="1"/>
</dbReference>
<dbReference type="SUPFAM" id="SSF46589">
    <property type="entry name" value="tRNA-binding arm"/>
    <property type="match status" value="1"/>
</dbReference>
<dbReference type="PROSITE" id="PS50862">
    <property type="entry name" value="AA_TRNA_LIGASE_II"/>
    <property type="match status" value="1"/>
</dbReference>
<organism>
    <name type="scientific">Yersinia pestis (strain Pestoides F)</name>
    <dbReference type="NCBI Taxonomy" id="386656"/>
    <lineage>
        <taxon>Bacteria</taxon>
        <taxon>Pseudomonadati</taxon>
        <taxon>Pseudomonadota</taxon>
        <taxon>Gammaproteobacteria</taxon>
        <taxon>Enterobacterales</taxon>
        <taxon>Yersiniaceae</taxon>
        <taxon>Yersinia</taxon>
    </lineage>
</organism>
<comment type="catalytic activity">
    <reaction evidence="1">
        <text>tRNA(Phe) + L-phenylalanine + ATP = L-phenylalanyl-tRNA(Phe) + AMP + diphosphate + H(+)</text>
        <dbReference type="Rhea" id="RHEA:19413"/>
        <dbReference type="Rhea" id="RHEA-COMP:9668"/>
        <dbReference type="Rhea" id="RHEA-COMP:9699"/>
        <dbReference type="ChEBI" id="CHEBI:15378"/>
        <dbReference type="ChEBI" id="CHEBI:30616"/>
        <dbReference type="ChEBI" id="CHEBI:33019"/>
        <dbReference type="ChEBI" id="CHEBI:58095"/>
        <dbReference type="ChEBI" id="CHEBI:78442"/>
        <dbReference type="ChEBI" id="CHEBI:78531"/>
        <dbReference type="ChEBI" id="CHEBI:456215"/>
        <dbReference type="EC" id="6.1.1.20"/>
    </reaction>
</comment>
<comment type="cofactor">
    <cofactor evidence="1">
        <name>Mg(2+)</name>
        <dbReference type="ChEBI" id="CHEBI:18420"/>
    </cofactor>
    <text evidence="1">Binds 2 magnesium ions per tetramer.</text>
</comment>
<comment type="subunit">
    <text evidence="1">Tetramer of two alpha and two beta subunits.</text>
</comment>
<comment type="subcellular location">
    <subcellularLocation>
        <location evidence="1">Cytoplasm</location>
    </subcellularLocation>
</comment>
<comment type="similarity">
    <text evidence="1">Belongs to the class-II aminoacyl-tRNA synthetase family. Phe-tRNA synthetase alpha subunit type 1 subfamily.</text>
</comment>
<gene>
    <name evidence="1" type="primary">pheS</name>
    <name type="ordered locus">YPDSF_0721</name>
</gene>
<accession>A4TIL5</accession>